<reference key="1">
    <citation type="journal article" date="2001" name="Science">
        <title>The genome of the natural genetic engineer Agrobacterium tumefaciens C58.</title>
        <authorList>
            <person name="Wood D.W."/>
            <person name="Setubal J.C."/>
            <person name="Kaul R."/>
            <person name="Monks D.E."/>
            <person name="Kitajima J.P."/>
            <person name="Okura V.K."/>
            <person name="Zhou Y."/>
            <person name="Chen L."/>
            <person name="Wood G.E."/>
            <person name="Almeida N.F. Jr."/>
            <person name="Woo L."/>
            <person name="Chen Y."/>
            <person name="Paulsen I.T."/>
            <person name="Eisen J.A."/>
            <person name="Karp P.D."/>
            <person name="Bovee D. Sr."/>
            <person name="Chapman P."/>
            <person name="Clendenning J."/>
            <person name="Deatherage G."/>
            <person name="Gillet W."/>
            <person name="Grant C."/>
            <person name="Kutyavin T."/>
            <person name="Levy R."/>
            <person name="Li M.-J."/>
            <person name="McClelland E."/>
            <person name="Palmieri A."/>
            <person name="Raymond C."/>
            <person name="Rouse G."/>
            <person name="Saenphimmachak C."/>
            <person name="Wu Z."/>
            <person name="Romero P."/>
            <person name="Gordon D."/>
            <person name="Zhang S."/>
            <person name="Yoo H."/>
            <person name="Tao Y."/>
            <person name="Biddle P."/>
            <person name="Jung M."/>
            <person name="Krespan W."/>
            <person name="Perry M."/>
            <person name="Gordon-Kamm B."/>
            <person name="Liao L."/>
            <person name="Kim S."/>
            <person name="Hendrick C."/>
            <person name="Zhao Z.-Y."/>
            <person name="Dolan M."/>
            <person name="Chumley F."/>
            <person name="Tingey S.V."/>
            <person name="Tomb J.-F."/>
            <person name="Gordon M.P."/>
            <person name="Olson M.V."/>
            <person name="Nester E.W."/>
        </authorList>
    </citation>
    <scope>NUCLEOTIDE SEQUENCE [LARGE SCALE GENOMIC DNA]</scope>
    <source>
        <strain>C58 / ATCC 33970</strain>
    </source>
</reference>
<reference key="2">
    <citation type="journal article" date="2001" name="Science">
        <title>Genome sequence of the plant pathogen and biotechnology agent Agrobacterium tumefaciens C58.</title>
        <authorList>
            <person name="Goodner B."/>
            <person name="Hinkle G."/>
            <person name="Gattung S."/>
            <person name="Miller N."/>
            <person name="Blanchard M."/>
            <person name="Qurollo B."/>
            <person name="Goldman B.S."/>
            <person name="Cao Y."/>
            <person name="Askenazi M."/>
            <person name="Halling C."/>
            <person name="Mullin L."/>
            <person name="Houmiel K."/>
            <person name="Gordon J."/>
            <person name="Vaudin M."/>
            <person name="Iartchouk O."/>
            <person name="Epp A."/>
            <person name="Liu F."/>
            <person name="Wollam C."/>
            <person name="Allinger M."/>
            <person name="Doughty D."/>
            <person name="Scott C."/>
            <person name="Lappas C."/>
            <person name="Markelz B."/>
            <person name="Flanagan C."/>
            <person name="Crowell C."/>
            <person name="Gurson J."/>
            <person name="Lomo C."/>
            <person name="Sear C."/>
            <person name="Strub G."/>
            <person name="Cielo C."/>
            <person name="Slater S."/>
        </authorList>
    </citation>
    <scope>NUCLEOTIDE SEQUENCE [LARGE SCALE GENOMIC DNA]</scope>
    <source>
        <strain>C58 / ATCC 33970</strain>
    </source>
</reference>
<protein>
    <recommendedName>
        <fullName evidence="3">Large ribosomal subunit protein bL9</fullName>
    </recommendedName>
    <alternativeName>
        <fullName>50S ribosomal protein L9</fullName>
    </alternativeName>
    <alternativeName>
        <fullName>Cultivar-specific nodulation protein 1</fullName>
    </alternativeName>
</protein>
<feature type="chain" id="PRO_0000176613" description="Large ribosomal subunit protein bL9">
    <location>
        <begin position="1"/>
        <end position="191"/>
    </location>
</feature>
<feature type="region of interest" description="Disordered" evidence="2">
    <location>
        <begin position="149"/>
        <end position="191"/>
    </location>
</feature>
<feature type="compositionally biased region" description="Acidic residues" evidence="2">
    <location>
        <begin position="179"/>
        <end position="191"/>
    </location>
</feature>
<accession>Q8UGF0</accession>
<gene>
    <name type="primary">rplI</name>
    <name type="synonym">csn1</name>
    <name type="ordered locus">Atu1088</name>
    <name type="ORF">AGR_C_2015</name>
</gene>
<evidence type="ECO:0000250" key="1"/>
<evidence type="ECO:0000256" key="2">
    <source>
        <dbReference type="SAM" id="MobiDB-lite"/>
    </source>
</evidence>
<evidence type="ECO:0000305" key="3"/>
<name>RL9_AGRFC</name>
<comment type="function">
    <text evidence="1">Binds to the 23S rRNA.</text>
</comment>
<comment type="similarity">
    <text evidence="3">Belongs to the bacterial ribosomal protein bL9 family.</text>
</comment>
<dbReference type="EMBL" id="AE007869">
    <property type="protein sequence ID" value="AAK86897.1"/>
    <property type="molecule type" value="Genomic_DNA"/>
</dbReference>
<dbReference type="PIR" id="AG2710">
    <property type="entry name" value="AG2710"/>
</dbReference>
<dbReference type="PIR" id="H97492">
    <property type="entry name" value="H97492"/>
</dbReference>
<dbReference type="RefSeq" id="NP_354112.1">
    <property type="nucleotide sequence ID" value="NC_003062.2"/>
</dbReference>
<dbReference type="RefSeq" id="WP_006314572.1">
    <property type="nucleotide sequence ID" value="NC_003062.2"/>
</dbReference>
<dbReference type="SMR" id="Q8UGF0"/>
<dbReference type="STRING" id="176299.Atu1088"/>
<dbReference type="EnsemblBacteria" id="AAK86897">
    <property type="protein sequence ID" value="AAK86897"/>
    <property type="gene ID" value="Atu1088"/>
</dbReference>
<dbReference type="GeneID" id="1133126"/>
<dbReference type="KEGG" id="atu:Atu1088"/>
<dbReference type="PATRIC" id="fig|176299.10.peg.1104"/>
<dbReference type="eggNOG" id="COG0359">
    <property type="taxonomic scope" value="Bacteria"/>
</dbReference>
<dbReference type="HOGENOM" id="CLU_078938_1_0_5"/>
<dbReference type="OrthoDB" id="9788336at2"/>
<dbReference type="PhylomeDB" id="Q8UGF0"/>
<dbReference type="BioCyc" id="AGRO:ATU1088-MONOMER"/>
<dbReference type="Proteomes" id="UP000000813">
    <property type="component" value="Chromosome circular"/>
</dbReference>
<dbReference type="GO" id="GO:1990904">
    <property type="term" value="C:ribonucleoprotein complex"/>
    <property type="evidence" value="ECO:0007669"/>
    <property type="project" value="UniProtKB-KW"/>
</dbReference>
<dbReference type="GO" id="GO:0005840">
    <property type="term" value="C:ribosome"/>
    <property type="evidence" value="ECO:0007669"/>
    <property type="project" value="UniProtKB-KW"/>
</dbReference>
<dbReference type="GO" id="GO:0019843">
    <property type="term" value="F:rRNA binding"/>
    <property type="evidence" value="ECO:0007669"/>
    <property type="project" value="UniProtKB-UniRule"/>
</dbReference>
<dbReference type="GO" id="GO:0003735">
    <property type="term" value="F:structural constituent of ribosome"/>
    <property type="evidence" value="ECO:0007669"/>
    <property type="project" value="InterPro"/>
</dbReference>
<dbReference type="GO" id="GO:0006412">
    <property type="term" value="P:translation"/>
    <property type="evidence" value="ECO:0007669"/>
    <property type="project" value="UniProtKB-UniRule"/>
</dbReference>
<dbReference type="Gene3D" id="3.10.430.100">
    <property type="entry name" value="Ribosomal protein L9, C-terminal domain"/>
    <property type="match status" value="1"/>
</dbReference>
<dbReference type="Gene3D" id="3.40.5.10">
    <property type="entry name" value="Ribosomal protein L9, N-terminal domain"/>
    <property type="match status" value="1"/>
</dbReference>
<dbReference type="HAMAP" id="MF_00503">
    <property type="entry name" value="Ribosomal_bL9"/>
    <property type="match status" value="1"/>
</dbReference>
<dbReference type="InterPro" id="IPR000244">
    <property type="entry name" value="Ribosomal_bL9"/>
</dbReference>
<dbReference type="InterPro" id="IPR009027">
    <property type="entry name" value="Ribosomal_bL9/RNase_H1_N"/>
</dbReference>
<dbReference type="InterPro" id="IPR020594">
    <property type="entry name" value="Ribosomal_bL9_bac/chp"/>
</dbReference>
<dbReference type="InterPro" id="IPR020069">
    <property type="entry name" value="Ribosomal_bL9_C"/>
</dbReference>
<dbReference type="InterPro" id="IPR036791">
    <property type="entry name" value="Ribosomal_bL9_C_sf"/>
</dbReference>
<dbReference type="InterPro" id="IPR020070">
    <property type="entry name" value="Ribosomal_bL9_N"/>
</dbReference>
<dbReference type="InterPro" id="IPR036935">
    <property type="entry name" value="Ribosomal_bL9_N_sf"/>
</dbReference>
<dbReference type="NCBIfam" id="TIGR00158">
    <property type="entry name" value="L9"/>
    <property type="match status" value="1"/>
</dbReference>
<dbReference type="PANTHER" id="PTHR21368">
    <property type="entry name" value="50S RIBOSOMAL PROTEIN L9"/>
    <property type="match status" value="1"/>
</dbReference>
<dbReference type="Pfam" id="PF03948">
    <property type="entry name" value="Ribosomal_L9_C"/>
    <property type="match status" value="1"/>
</dbReference>
<dbReference type="Pfam" id="PF01281">
    <property type="entry name" value="Ribosomal_L9_N"/>
    <property type="match status" value="1"/>
</dbReference>
<dbReference type="SUPFAM" id="SSF55658">
    <property type="entry name" value="L9 N-domain-like"/>
    <property type="match status" value="1"/>
</dbReference>
<dbReference type="SUPFAM" id="SSF55653">
    <property type="entry name" value="Ribosomal protein L9 C-domain"/>
    <property type="match status" value="1"/>
</dbReference>
<dbReference type="PROSITE" id="PS00651">
    <property type="entry name" value="RIBOSOMAL_L9"/>
    <property type="match status" value="1"/>
</dbReference>
<organism>
    <name type="scientific">Agrobacterium fabrum (strain C58 / ATCC 33970)</name>
    <name type="common">Agrobacterium tumefaciens (strain C58)</name>
    <dbReference type="NCBI Taxonomy" id="176299"/>
    <lineage>
        <taxon>Bacteria</taxon>
        <taxon>Pseudomonadati</taxon>
        <taxon>Pseudomonadota</taxon>
        <taxon>Alphaproteobacteria</taxon>
        <taxon>Hyphomicrobiales</taxon>
        <taxon>Rhizobiaceae</taxon>
        <taxon>Rhizobium/Agrobacterium group</taxon>
        <taxon>Agrobacterium</taxon>
        <taxon>Agrobacterium tumefaciens complex</taxon>
    </lineage>
</organism>
<keyword id="KW-1185">Reference proteome</keyword>
<keyword id="KW-0687">Ribonucleoprotein</keyword>
<keyword id="KW-0689">Ribosomal protein</keyword>
<keyword id="KW-0694">RNA-binding</keyword>
<keyword id="KW-0699">rRNA-binding</keyword>
<sequence length="191" mass="20922">MDVILLERINKLGQMGETVKVRDGYARNFLLPQGKALRANAANKTRFETERATLEARNLERKSEAQTVAEALAGKSFIVVRSAGETGQLYGSVAARDVVEILGAEGFNIGRNQVELNTPIKTIGLHNVTLHLHAEVELQVELNVARSAEEAERQSKGESLTSADAIYGVDEDALRPEDFFDPEADGNEDDE</sequence>
<proteinExistence type="inferred from homology"/>